<proteinExistence type="inferred from homology"/>
<gene>
    <name evidence="1" type="primary">sepF</name>
    <name type="ordered locus">SynWH7803_0572</name>
</gene>
<evidence type="ECO:0000255" key="1">
    <source>
        <dbReference type="HAMAP-Rule" id="MF_01197"/>
    </source>
</evidence>
<keyword id="KW-0131">Cell cycle</keyword>
<keyword id="KW-0132">Cell division</keyword>
<keyword id="KW-0963">Cytoplasm</keyword>
<keyword id="KW-1185">Reference proteome</keyword>
<keyword id="KW-0717">Septation</keyword>
<organism>
    <name type="scientific">Synechococcus sp. (strain WH7803)</name>
    <dbReference type="NCBI Taxonomy" id="32051"/>
    <lineage>
        <taxon>Bacteria</taxon>
        <taxon>Bacillati</taxon>
        <taxon>Cyanobacteriota</taxon>
        <taxon>Cyanophyceae</taxon>
        <taxon>Synechococcales</taxon>
        <taxon>Synechococcaceae</taxon>
        <taxon>Synechococcus</taxon>
    </lineage>
</organism>
<feature type="chain" id="PRO_0000334130" description="Cell division protein SepF">
    <location>
        <begin position="1"/>
        <end position="190"/>
    </location>
</feature>
<dbReference type="EMBL" id="CT971583">
    <property type="protein sequence ID" value="CAK22998.1"/>
    <property type="molecule type" value="Genomic_DNA"/>
</dbReference>
<dbReference type="SMR" id="A5GJ83"/>
<dbReference type="STRING" id="32051.SynWH7803_0572"/>
<dbReference type="KEGG" id="syx:SynWH7803_0572"/>
<dbReference type="eggNOG" id="COG1799">
    <property type="taxonomic scope" value="Bacteria"/>
</dbReference>
<dbReference type="HOGENOM" id="CLU_078499_1_0_3"/>
<dbReference type="OrthoDB" id="9815206at2"/>
<dbReference type="Proteomes" id="UP000001566">
    <property type="component" value="Chromosome"/>
</dbReference>
<dbReference type="GO" id="GO:0005737">
    <property type="term" value="C:cytoplasm"/>
    <property type="evidence" value="ECO:0007669"/>
    <property type="project" value="UniProtKB-SubCell"/>
</dbReference>
<dbReference type="GO" id="GO:0000917">
    <property type="term" value="P:division septum assembly"/>
    <property type="evidence" value="ECO:0007669"/>
    <property type="project" value="UniProtKB-KW"/>
</dbReference>
<dbReference type="GO" id="GO:0043093">
    <property type="term" value="P:FtsZ-dependent cytokinesis"/>
    <property type="evidence" value="ECO:0007669"/>
    <property type="project" value="UniProtKB-UniRule"/>
</dbReference>
<dbReference type="Gene3D" id="3.30.110.150">
    <property type="entry name" value="SepF-like protein"/>
    <property type="match status" value="1"/>
</dbReference>
<dbReference type="HAMAP" id="MF_01197">
    <property type="entry name" value="SepF"/>
    <property type="match status" value="1"/>
</dbReference>
<dbReference type="InterPro" id="IPR023052">
    <property type="entry name" value="Cell_div_SepF"/>
</dbReference>
<dbReference type="InterPro" id="IPR007561">
    <property type="entry name" value="Cell_div_SepF/SepF-rel"/>
</dbReference>
<dbReference type="InterPro" id="IPR038594">
    <property type="entry name" value="SepF-like_sf"/>
</dbReference>
<dbReference type="PANTHER" id="PTHR35798">
    <property type="entry name" value="CELL DIVISION PROTEIN SEPF"/>
    <property type="match status" value="1"/>
</dbReference>
<dbReference type="PANTHER" id="PTHR35798:SF1">
    <property type="entry name" value="CELL DIVISION PROTEIN SEPF"/>
    <property type="match status" value="1"/>
</dbReference>
<dbReference type="Pfam" id="PF04472">
    <property type="entry name" value="SepF"/>
    <property type="match status" value="1"/>
</dbReference>
<reference key="1">
    <citation type="submission" date="2006-05" db="EMBL/GenBank/DDBJ databases">
        <authorList>
            <consortium name="Genoscope"/>
        </authorList>
    </citation>
    <scope>NUCLEOTIDE SEQUENCE [LARGE SCALE GENOMIC DNA]</scope>
    <source>
        <strain>WH7803</strain>
    </source>
</reference>
<comment type="function">
    <text evidence="1">Cell division protein that is part of the divisome complex and is recruited early to the Z-ring. Probably stimulates Z-ring formation, perhaps through the cross-linking of FtsZ protofilaments. Its function overlaps with FtsA.</text>
</comment>
<comment type="subunit">
    <text evidence="1">Homodimer. Interacts with FtsZ.</text>
</comment>
<comment type="subcellular location">
    <subcellularLocation>
        <location evidence="1">Cytoplasm</location>
    </subcellularLocation>
    <text evidence="1">Localizes to the division site, in a FtsZ-dependent manner.</text>
</comment>
<comment type="similarity">
    <text evidence="1">Belongs to the SepF family.</text>
</comment>
<protein>
    <recommendedName>
        <fullName evidence="1">Cell division protein SepF</fullName>
    </recommendedName>
</protein>
<name>SEPF_SYNPW</name>
<accession>A5GJ83</accession>
<sequence>MSLISRLRAVVAGDDYLDGDYDDLDYDAGEHDDSPQAMASASSALAPLDAANPFDMDQGFSGSNVIGMPGISSSAAEVSLMEPRSFDEMPRAIQALRERKTVILNLTMMEPDQAQRAVDFVAGGTFAIDGHQERVGESIFLFAPSCVTVTNSAHEEASTPTVVTKDVEQASAEASVAPAPAWAAPGAAAL</sequence>